<evidence type="ECO:0000250" key="1"/>
<evidence type="ECO:0000250" key="2">
    <source>
        <dbReference type="UniProtKB" id="P68137"/>
    </source>
</evidence>
<evidence type="ECO:0000305" key="3"/>
<name>ACT26_DICDI</name>
<comment type="function">
    <text evidence="1">Actins are highly conserved proteins that are involved in various types of cell motility and are ubiquitously expressed in all eukaryotic cells. Multiple isoforms are involved in various cellular functions such as cytoskeleton structure, cell mobility, chromosome movement and muscle contraction (By similarity).</text>
</comment>
<comment type="catalytic activity">
    <reaction evidence="2">
        <text>ATP + H2O = ADP + phosphate + H(+)</text>
        <dbReference type="Rhea" id="RHEA:13065"/>
        <dbReference type="ChEBI" id="CHEBI:15377"/>
        <dbReference type="ChEBI" id="CHEBI:15378"/>
        <dbReference type="ChEBI" id="CHEBI:30616"/>
        <dbReference type="ChEBI" id="CHEBI:43474"/>
        <dbReference type="ChEBI" id="CHEBI:456216"/>
    </reaction>
</comment>
<comment type="subcellular location">
    <subcellularLocation>
        <location evidence="1">Cytoplasm</location>
        <location evidence="1">Cytoskeleton</location>
    </subcellularLocation>
</comment>
<comment type="similarity">
    <text evidence="3">Belongs to the actin family.</text>
</comment>
<accession>Q55CU2</accession>
<feature type="chain" id="PRO_0000312676" description="Putative actin-26">
    <location>
        <begin position="1"/>
        <end position="375"/>
    </location>
</feature>
<gene>
    <name type="primary">act26</name>
    <name type="ORF">DDB_G0269902</name>
</gene>
<dbReference type="EC" id="3.6.4.-" evidence="2"/>
<dbReference type="EMBL" id="AAFI02000005">
    <property type="protein sequence ID" value="EAL72301.1"/>
    <property type="molecule type" value="Genomic_DNA"/>
</dbReference>
<dbReference type="RefSeq" id="XP_646389.1">
    <property type="nucleotide sequence ID" value="XM_641297.1"/>
</dbReference>
<dbReference type="SMR" id="Q55CU2"/>
<dbReference type="FunCoup" id="Q55CU2">
    <property type="interactions" value="8"/>
</dbReference>
<dbReference type="STRING" id="44689.Q55CU2"/>
<dbReference type="PaxDb" id="44689-DDB0220464"/>
<dbReference type="EnsemblProtists" id="EAL72301">
    <property type="protein sequence ID" value="EAL72301"/>
    <property type="gene ID" value="DDB_G0269902"/>
</dbReference>
<dbReference type="GeneID" id="8617344"/>
<dbReference type="KEGG" id="ddi:DDB_G0269902"/>
<dbReference type="dictyBase" id="DDB_G0269902">
    <property type="gene designation" value="act26"/>
</dbReference>
<dbReference type="VEuPathDB" id="AmoebaDB:DDB_G0269902"/>
<dbReference type="eggNOG" id="KOG0676">
    <property type="taxonomic scope" value="Eukaryota"/>
</dbReference>
<dbReference type="HOGENOM" id="CLU_027965_0_2_1"/>
<dbReference type="InParanoid" id="Q55CU2"/>
<dbReference type="PhylomeDB" id="Q55CU2"/>
<dbReference type="Reactome" id="R-DDI-114608">
    <property type="pathway name" value="Platelet degranulation"/>
</dbReference>
<dbReference type="Reactome" id="R-DDI-2029482">
    <property type="pathway name" value="Regulation of actin dynamics for phagocytic cup formation"/>
</dbReference>
<dbReference type="Reactome" id="R-DDI-446353">
    <property type="pathway name" value="Cell-extracellular matrix interactions"/>
</dbReference>
<dbReference type="Reactome" id="R-DDI-5626467">
    <property type="pathway name" value="RHO GTPases activate IQGAPs"/>
</dbReference>
<dbReference type="Reactome" id="R-DDI-5663213">
    <property type="pathway name" value="RHO GTPases Activate WASPs and WAVEs"/>
</dbReference>
<dbReference type="Reactome" id="R-DDI-9013418">
    <property type="pathway name" value="RHOBTB2 GTPase cycle"/>
</dbReference>
<dbReference type="PRO" id="PR:Q55CU2"/>
<dbReference type="Proteomes" id="UP000002195">
    <property type="component" value="Chromosome 1"/>
</dbReference>
<dbReference type="GO" id="GO:0015629">
    <property type="term" value="C:actin cytoskeleton"/>
    <property type="evidence" value="ECO:0000250"/>
    <property type="project" value="dictyBase"/>
</dbReference>
<dbReference type="GO" id="GO:0005737">
    <property type="term" value="C:cytoplasm"/>
    <property type="evidence" value="ECO:0007669"/>
    <property type="project" value="UniProtKB-KW"/>
</dbReference>
<dbReference type="GO" id="GO:0005524">
    <property type="term" value="F:ATP binding"/>
    <property type="evidence" value="ECO:0007669"/>
    <property type="project" value="UniProtKB-KW"/>
</dbReference>
<dbReference type="GO" id="GO:0016787">
    <property type="term" value="F:hydrolase activity"/>
    <property type="evidence" value="ECO:0007669"/>
    <property type="project" value="UniProtKB-KW"/>
</dbReference>
<dbReference type="GO" id="GO:0017022">
    <property type="term" value="F:myosin binding"/>
    <property type="evidence" value="ECO:0000250"/>
    <property type="project" value="dictyBase"/>
</dbReference>
<dbReference type="GO" id="GO:0005200">
    <property type="term" value="F:structural constituent of cytoskeleton"/>
    <property type="evidence" value="ECO:0000250"/>
    <property type="project" value="dictyBase"/>
</dbReference>
<dbReference type="GO" id="GO:0006909">
    <property type="term" value="P:phagocytosis"/>
    <property type="evidence" value="ECO:0000250"/>
    <property type="project" value="dictyBase"/>
</dbReference>
<dbReference type="FunFam" id="3.30.420.40:FF:000148">
    <property type="entry name" value="Actin, alpha skeletal muscle"/>
    <property type="match status" value="1"/>
</dbReference>
<dbReference type="FunFam" id="3.90.640.10:FF:000047">
    <property type="entry name" value="Actin, alpha skeletal muscle"/>
    <property type="match status" value="1"/>
</dbReference>
<dbReference type="FunFam" id="3.30.420.40:FF:000058">
    <property type="entry name" value="Putative actin-related protein 5"/>
    <property type="match status" value="1"/>
</dbReference>
<dbReference type="Gene3D" id="3.30.420.40">
    <property type="match status" value="2"/>
</dbReference>
<dbReference type="Gene3D" id="3.90.640.10">
    <property type="entry name" value="Actin, Chain A, domain 4"/>
    <property type="match status" value="1"/>
</dbReference>
<dbReference type="InterPro" id="IPR004000">
    <property type="entry name" value="Actin"/>
</dbReference>
<dbReference type="InterPro" id="IPR004001">
    <property type="entry name" value="Actin_CS"/>
</dbReference>
<dbReference type="InterPro" id="IPR043129">
    <property type="entry name" value="ATPase_NBD"/>
</dbReference>
<dbReference type="PANTHER" id="PTHR11937">
    <property type="entry name" value="ACTIN"/>
    <property type="match status" value="1"/>
</dbReference>
<dbReference type="Pfam" id="PF00022">
    <property type="entry name" value="Actin"/>
    <property type="match status" value="1"/>
</dbReference>
<dbReference type="PRINTS" id="PR00190">
    <property type="entry name" value="ACTIN"/>
</dbReference>
<dbReference type="SMART" id="SM00268">
    <property type="entry name" value="ACTIN"/>
    <property type="match status" value="1"/>
</dbReference>
<dbReference type="SUPFAM" id="SSF53067">
    <property type="entry name" value="Actin-like ATPase domain"/>
    <property type="match status" value="2"/>
</dbReference>
<dbReference type="PROSITE" id="PS00406">
    <property type="entry name" value="ACTINS_1"/>
    <property type="match status" value="1"/>
</dbReference>
<dbReference type="PROSITE" id="PS00432">
    <property type="entry name" value="ACTINS_2"/>
    <property type="match status" value="1"/>
</dbReference>
<protein>
    <recommendedName>
        <fullName>Putative actin-26</fullName>
        <ecNumber evidence="2">3.6.4.-</ecNumber>
    </recommendedName>
</protein>
<reference key="1">
    <citation type="journal article" date="2005" name="Nature">
        <title>The genome of the social amoeba Dictyostelium discoideum.</title>
        <authorList>
            <person name="Eichinger L."/>
            <person name="Pachebat J.A."/>
            <person name="Gloeckner G."/>
            <person name="Rajandream M.A."/>
            <person name="Sucgang R."/>
            <person name="Berriman M."/>
            <person name="Song J."/>
            <person name="Olsen R."/>
            <person name="Szafranski K."/>
            <person name="Xu Q."/>
            <person name="Tunggal B."/>
            <person name="Kummerfeld S."/>
            <person name="Madera M."/>
            <person name="Konfortov B.A."/>
            <person name="Rivero F."/>
            <person name="Bankier A.T."/>
            <person name="Lehmann R."/>
            <person name="Hamlin N."/>
            <person name="Davies R."/>
            <person name="Gaudet P."/>
            <person name="Fey P."/>
            <person name="Pilcher K."/>
            <person name="Chen G."/>
            <person name="Saunders D."/>
            <person name="Sodergren E.J."/>
            <person name="Davis P."/>
            <person name="Kerhornou A."/>
            <person name="Nie X."/>
            <person name="Hall N."/>
            <person name="Anjard C."/>
            <person name="Hemphill L."/>
            <person name="Bason N."/>
            <person name="Farbrother P."/>
            <person name="Desany B."/>
            <person name="Just E."/>
            <person name="Morio T."/>
            <person name="Rost R."/>
            <person name="Churcher C.M."/>
            <person name="Cooper J."/>
            <person name="Haydock S."/>
            <person name="van Driessche N."/>
            <person name="Cronin A."/>
            <person name="Goodhead I."/>
            <person name="Muzny D.M."/>
            <person name="Mourier T."/>
            <person name="Pain A."/>
            <person name="Lu M."/>
            <person name="Harper D."/>
            <person name="Lindsay R."/>
            <person name="Hauser H."/>
            <person name="James K.D."/>
            <person name="Quiles M."/>
            <person name="Madan Babu M."/>
            <person name="Saito T."/>
            <person name="Buchrieser C."/>
            <person name="Wardroper A."/>
            <person name="Felder M."/>
            <person name="Thangavelu M."/>
            <person name="Johnson D."/>
            <person name="Knights A."/>
            <person name="Loulseged H."/>
            <person name="Mungall K.L."/>
            <person name="Oliver K."/>
            <person name="Price C."/>
            <person name="Quail M.A."/>
            <person name="Urushihara H."/>
            <person name="Hernandez J."/>
            <person name="Rabbinowitsch E."/>
            <person name="Steffen D."/>
            <person name="Sanders M."/>
            <person name="Ma J."/>
            <person name="Kohara Y."/>
            <person name="Sharp S."/>
            <person name="Simmonds M.N."/>
            <person name="Spiegler S."/>
            <person name="Tivey A."/>
            <person name="Sugano S."/>
            <person name="White B."/>
            <person name="Walker D."/>
            <person name="Woodward J.R."/>
            <person name="Winckler T."/>
            <person name="Tanaka Y."/>
            <person name="Shaulsky G."/>
            <person name="Schleicher M."/>
            <person name="Weinstock G.M."/>
            <person name="Rosenthal A."/>
            <person name="Cox E.C."/>
            <person name="Chisholm R.L."/>
            <person name="Gibbs R.A."/>
            <person name="Loomis W.F."/>
            <person name="Platzer M."/>
            <person name="Kay R.R."/>
            <person name="Williams J.G."/>
            <person name="Dear P.H."/>
            <person name="Noegel A.A."/>
            <person name="Barrell B.G."/>
            <person name="Kuspa A."/>
        </authorList>
    </citation>
    <scope>NUCLEOTIDE SEQUENCE [LARGE SCALE GENOMIC DNA]</scope>
    <source>
        <strain>AX4</strain>
    </source>
</reference>
<proteinExistence type="inferred from homology"/>
<organism>
    <name type="scientific">Dictyostelium discoideum</name>
    <name type="common">Social amoeba</name>
    <dbReference type="NCBI Taxonomy" id="44689"/>
    <lineage>
        <taxon>Eukaryota</taxon>
        <taxon>Amoebozoa</taxon>
        <taxon>Evosea</taxon>
        <taxon>Eumycetozoa</taxon>
        <taxon>Dictyostelia</taxon>
        <taxon>Dictyosteliales</taxon>
        <taxon>Dictyosteliaceae</taxon>
        <taxon>Dictyostelium</taxon>
    </lineage>
</organism>
<sequence length="375" mass="42340">MEDNITSIVIDCGSGMCKAGIGGEEFPRVSFPSIVGKPRFEKTMCAIGNKEYYVGDEAQSQRGMLSLKYPIKNGIVVNWEYMEKLLFHMFYNELRVSPDQYPILFTESPLNPKSNREMLTQIMFEKFNVPALYIAIQAVLSLYASGRTCGIVLDSGDDVTHTVPIYGGYVLQHSIIRLNFAGSDLTEYMAKLLLERGYSFTTTSEMEIVKSIKEKLAYVAINFNAEMSKPIDTLETTYQLPDGQIIIIGNERFRCAEALFQPSMIGLECDGIHETIFKSIMMCDIDIRKHMYANILLSGGNTMLSGISDRIYNQLRELAPNNMKILIVASPERKNLVWIGGSILTTLPLFQEMWISKEEYDEHGPSIINKKVGLY</sequence>
<keyword id="KW-0067">ATP-binding</keyword>
<keyword id="KW-0963">Cytoplasm</keyword>
<keyword id="KW-0206">Cytoskeleton</keyword>
<keyword id="KW-0378">Hydrolase</keyword>
<keyword id="KW-0547">Nucleotide-binding</keyword>
<keyword id="KW-1185">Reference proteome</keyword>